<evidence type="ECO:0000255" key="1">
    <source>
        <dbReference type="HAMAP-Rule" id="MF_01366"/>
    </source>
</evidence>
<evidence type="ECO:0000305" key="2"/>
<proteinExistence type="inferred from homology"/>
<keyword id="KW-0687">Ribonucleoprotein</keyword>
<keyword id="KW-0689">Ribosomal protein</keyword>
<dbReference type="EMBL" id="CP000789">
    <property type="protein sequence ID" value="ABU69881.1"/>
    <property type="molecule type" value="Genomic_DNA"/>
</dbReference>
<dbReference type="RefSeq" id="WP_005372872.1">
    <property type="nucleotide sequence ID" value="NC_022269.1"/>
</dbReference>
<dbReference type="SMR" id="A7MWM9"/>
<dbReference type="GeneID" id="83582980"/>
<dbReference type="KEGG" id="vha:VIBHAR_00881"/>
<dbReference type="PATRIC" id="fig|338187.25.peg.1736"/>
<dbReference type="Proteomes" id="UP000008152">
    <property type="component" value="Chromosome I"/>
</dbReference>
<dbReference type="GO" id="GO:0022625">
    <property type="term" value="C:cytosolic large ribosomal subunit"/>
    <property type="evidence" value="ECO:0007669"/>
    <property type="project" value="TreeGrafter"/>
</dbReference>
<dbReference type="GO" id="GO:0003729">
    <property type="term" value="F:mRNA binding"/>
    <property type="evidence" value="ECO:0007669"/>
    <property type="project" value="TreeGrafter"/>
</dbReference>
<dbReference type="GO" id="GO:0003735">
    <property type="term" value="F:structural constituent of ribosome"/>
    <property type="evidence" value="ECO:0007669"/>
    <property type="project" value="InterPro"/>
</dbReference>
<dbReference type="GO" id="GO:0017148">
    <property type="term" value="P:negative regulation of translation"/>
    <property type="evidence" value="ECO:0007669"/>
    <property type="project" value="TreeGrafter"/>
</dbReference>
<dbReference type="GO" id="GO:0006412">
    <property type="term" value="P:translation"/>
    <property type="evidence" value="ECO:0007669"/>
    <property type="project" value="UniProtKB-UniRule"/>
</dbReference>
<dbReference type="CDD" id="cd00392">
    <property type="entry name" value="Ribosomal_L13"/>
    <property type="match status" value="1"/>
</dbReference>
<dbReference type="FunFam" id="3.90.1180.10:FF:000001">
    <property type="entry name" value="50S ribosomal protein L13"/>
    <property type="match status" value="1"/>
</dbReference>
<dbReference type="Gene3D" id="3.90.1180.10">
    <property type="entry name" value="Ribosomal protein L13"/>
    <property type="match status" value="1"/>
</dbReference>
<dbReference type="HAMAP" id="MF_01366">
    <property type="entry name" value="Ribosomal_uL13"/>
    <property type="match status" value="1"/>
</dbReference>
<dbReference type="InterPro" id="IPR005822">
    <property type="entry name" value="Ribosomal_uL13"/>
</dbReference>
<dbReference type="InterPro" id="IPR005823">
    <property type="entry name" value="Ribosomal_uL13_bac-type"/>
</dbReference>
<dbReference type="InterPro" id="IPR023563">
    <property type="entry name" value="Ribosomal_uL13_CS"/>
</dbReference>
<dbReference type="InterPro" id="IPR036899">
    <property type="entry name" value="Ribosomal_uL13_sf"/>
</dbReference>
<dbReference type="NCBIfam" id="TIGR01066">
    <property type="entry name" value="rplM_bact"/>
    <property type="match status" value="1"/>
</dbReference>
<dbReference type="PANTHER" id="PTHR11545:SF2">
    <property type="entry name" value="LARGE RIBOSOMAL SUBUNIT PROTEIN UL13M"/>
    <property type="match status" value="1"/>
</dbReference>
<dbReference type="PANTHER" id="PTHR11545">
    <property type="entry name" value="RIBOSOMAL PROTEIN L13"/>
    <property type="match status" value="1"/>
</dbReference>
<dbReference type="Pfam" id="PF00572">
    <property type="entry name" value="Ribosomal_L13"/>
    <property type="match status" value="1"/>
</dbReference>
<dbReference type="PIRSF" id="PIRSF002181">
    <property type="entry name" value="Ribosomal_L13"/>
    <property type="match status" value="1"/>
</dbReference>
<dbReference type="SUPFAM" id="SSF52161">
    <property type="entry name" value="Ribosomal protein L13"/>
    <property type="match status" value="1"/>
</dbReference>
<dbReference type="PROSITE" id="PS00783">
    <property type="entry name" value="RIBOSOMAL_L13"/>
    <property type="match status" value="1"/>
</dbReference>
<name>RL13_VIBC1</name>
<comment type="function">
    <text evidence="1">This protein is one of the early assembly proteins of the 50S ribosomal subunit, although it is not seen to bind rRNA by itself. It is important during the early stages of 50S assembly.</text>
</comment>
<comment type="subunit">
    <text evidence="1">Part of the 50S ribosomal subunit.</text>
</comment>
<comment type="similarity">
    <text evidence="1">Belongs to the universal ribosomal protein uL13 family.</text>
</comment>
<organism>
    <name type="scientific">Vibrio campbellii (strain ATCC BAA-1116)</name>
    <dbReference type="NCBI Taxonomy" id="2902295"/>
    <lineage>
        <taxon>Bacteria</taxon>
        <taxon>Pseudomonadati</taxon>
        <taxon>Pseudomonadota</taxon>
        <taxon>Gammaproteobacteria</taxon>
        <taxon>Vibrionales</taxon>
        <taxon>Vibrionaceae</taxon>
        <taxon>Vibrio</taxon>
    </lineage>
</organism>
<reference key="1">
    <citation type="submission" date="2007-08" db="EMBL/GenBank/DDBJ databases">
        <authorList>
            <consortium name="The Vibrio harveyi Genome Sequencing Project"/>
            <person name="Bassler B."/>
            <person name="Clifton S.W."/>
            <person name="Fulton L."/>
            <person name="Delehaunty K."/>
            <person name="Fronick C."/>
            <person name="Harrison M."/>
            <person name="Markivic C."/>
            <person name="Fulton R."/>
            <person name="Tin-Wollam A.-M."/>
            <person name="Shah N."/>
            <person name="Pepin K."/>
            <person name="Nash W."/>
            <person name="Thiruvilangam P."/>
            <person name="Bhonagiri V."/>
            <person name="Waters C."/>
            <person name="Tu K.C."/>
            <person name="Irgon J."/>
            <person name="Wilson R.K."/>
        </authorList>
    </citation>
    <scope>NUCLEOTIDE SEQUENCE [LARGE SCALE GENOMIC DNA]</scope>
    <source>
        <strain>ATCC BAA-1116 / BB120</strain>
    </source>
</reference>
<feature type="chain" id="PRO_1000055490" description="Large ribosomal subunit protein uL13">
    <location>
        <begin position="1"/>
        <end position="142"/>
    </location>
</feature>
<gene>
    <name evidence="1" type="primary">rplM</name>
    <name type="ordered locus">VIBHAR_00881</name>
</gene>
<sequence length="142" mass="15962">MKTFVAKPETVKRDWYVVDAEGKTLGRLASEIASRLRGKHKAEYTPHVDTGDYIIVINAEKVAVTGNKAKNKVYYRHSEFPGGLKSITFEKLIDRKPEMALELAVKGMLPRGPLGRAMYRKLKVYAGAEHNHVAQQPQVLDI</sequence>
<accession>A7MWM9</accession>
<protein>
    <recommendedName>
        <fullName evidence="1">Large ribosomal subunit protein uL13</fullName>
    </recommendedName>
    <alternativeName>
        <fullName evidence="2">50S ribosomal protein L13</fullName>
    </alternativeName>
</protein>